<keyword id="KW-0149">Chlorophyll biosynthesis</keyword>
<keyword id="KW-0150">Chloroplast</keyword>
<keyword id="KW-0521">NADP</keyword>
<keyword id="KW-0560">Oxidoreductase</keyword>
<keyword id="KW-0602">Photosynthesis</keyword>
<keyword id="KW-0934">Plastid</keyword>
<keyword id="KW-1185">Reference proteome</keyword>
<keyword id="KW-0809">Transit peptide</keyword>
<gene>
    <name type="primary">CHLP</name>
</gene>
<evidence type="ECO:0000255" key="1"/>
<evidence type="ECO:0000269" key="2">
    <source>
    </source>
</evidence>
<evidence type="ECO:0000305" key="3"/>
<sequence>MASIALKTFTGLRQSSPENNSITLSKSLPFTQTHRRLRINASKSSPRVNGRNLRVAVVGGGPAGGAAAETLAKGGIETFLIERKMDNCKPCGGAIPLCMVGEFDLPLDIIDRKVTKMKMISPSNVAVDIGQTLKPHEYIGMVRREVLDAYLRDRAAEAGASVLNGLFLKMDMPKAPNAPYVLHYTAYDSKTNGAGEKRTLEVDAVIGADGANSRVAKSINAGDYEYAIAFQERIKISDDKMKYYENLAEMYVGDDVSPDFYGWVFPKCDHVAVGTGTVTHKADIKKFQLATRLRADSKITGGKIIRVEAHPIPEHPRPRRLQDRVALVGDAAGYVTKCSGEGIYFAAKSGRMCAEAIVEGSEMGKRMVDESDLRKYLEKWDKTYWPTYKVLDILQKVFYRSNPAREAFVEMCADEYVQKMTFDSYLYKKVAPGNPIEDLKLAVNTIGSLVRANALRREMDKLSV</sequence>
<reference key="1">
    <citation type="journal article" date="1999" name="Plant Physiol.">
        <title>Reduced activity of geranylgeranyl reductase leads to loss of chlorophyll and tocopherol and to partially geranylgeranylated chlorophyll in transgenic tobacco plants expressing antisense RNA for geranylgeranyl reductase.</title>
        <authorList>
            <person name="Tanaka R."/>
            <person name="Oster U."/>
            <person name="Kruse E."/>
            <person name="Ruediger W."/>
            <person name="Grimm B."/>
        </authorList>
    </citation>
    <scope>NUCLEOTIDE SEQUENCE [MRNA]</scope>
    <scope>FUNCTION</scope>
    <scope>DEVELOPMENTAL STAGE</scope>
</reference>
<organism>
    <name type="scientific">Nicotiana tabacum</name>
    <name type="common">Common tobacco</name>
    <dbReference type="NCBI Taxonomy" id="4097"/>
    <lineage>
        <taxon>Eukaryota</taxon>
        <taxon>Viridiplantae</taxon>
        <taxon>Streptophyta</taxon>
        <taxon>Embryophyta</taxon>
        <taxon>Tracheophyta</taxon>
        <taxon>Spermatophyta</taxon>
        <taxon>Magnoliopsida</taxon>
        <taxon>eudicotyledons</taxon>
        <taxon>Gunneridae</taxon>
        <taxon>Pentapetalae</taxon>
        <taxon>asterids</taxon>
        <taxon>lamiids</taxon>
        <taxon>Solanales</taxon>
        <taxon>Solanaceae</taxon>
        <taxon>Nicotianoideae</taxon>
        <taxon>Nicotianeae</taxon>
        <taxon>Nicotiana</taxon>
    </lineage>
</organism>
<protein>
    <recommendedName>
        <fullName>Geranylgeranyl diphosphate reductase, chloroplastic</fullName>
        <ecNumber>1.3.1.83</ecNumber>
    </recommendedName>
    <alternativeName>
        <fullName>Geranylgeranyl reductase</fullName>
    </alternativeName>
</protein>
<proteinExistence type="evidence at transcript level"/>
<accession>Q9ZS34</accession>
<dbReference type="EC" id="1.3.1.83"/>
<dbReference type="EMBL" id="AJ007789">
    <property type="protein sequence ID" value="CAA07683.1"/>
    <property type="molecule type" value="mRNA"/>
</dbReference>
<dbReference type="RefSeq" id="NP_001312288.1">
    <property type="nucleotide sequence ID" value="NM_001325359.1"/>
</dbReference>
<dbReference type="SMR" id="Q9ZS34"/>
<dbReference type="STRING" id="4097.Q9ZS34"/>
<dbReference type="PaxDb" id="4097-Q9ZS34"/>
<dbReference type="GeneID" id="107783257"/>
<dbReference type="KEGG" id="ag:CAA07683"/>
<dbReference type="KEGG" id="nta:107783257"/>
<dbReference type="OMA" id="MVNPFNG"/>
<dbReference type="OrthoDB" id="655030at2759"/>
<dbReference type="BioCyc" id="MetaCyc:MONOMER-14870"/>
<dbReference type="BRENDA" id="1.3.1.83">
    <property type="organism ID" value="3645"/>
</dbReference>
<dbReference type="UniPathway" id="UPA00160"/>
<dbReference type="UniPathway" id="UPA00668"/>
<dbReference type="Proteomes" id="UP000084051">
    <property type="component" value="Unplaced"/>
</dbReference>
<dbReference type="GO" id="GO:0009507">
    <property type="term" value="C:chloroplast"/>
    <property type="evidence" value="ECO:0007669"/>
    <property type="project" value="UniProtKB-SubCell"/>
</dbReference>
<dbReference type="GO" id="GO:0071949">
    <property type="term" value="F:FAD binding"/>
    <property type="evidence" value="ECO:0007669"/>
    <property type="project" value="InterPro"/>
</dbReference>
<dbReference type="GO" id="GO:0102067">
    <property type="term" value="F:geranylgeranyl diphosphate reductase activity"/>
    <property type="evidence" value="ECO:0007669"/>
    <property type="project" value="UniProtKB-EC"/>
</dbReference>
<dbReference type="GO" id="GO:0045550">
    <property type="term" value="F:geranylgeranyl reductase activity"/>
    <property type="evidence" value="ECO:0000318"/>
    <property type="project" value="GO_Central"/>
</dbReference>
<dbReference type="GO" id="GO:0015995">
    <property type="term" value="P:chlorophyll biosynthetic process"/>
    <property type="evidence" value="ECO:0000315"/>
    <property type="project" value="UniProtKB"/>
</dbReference>
<dbReference type="GO" id="GO:0033385">
    <property type="term" value="P:geranylgeranyl diphosphate metabolic process"/>
    <property type="evidence" value="ECO:0000315"/>
    <property type="project" value="UniProtKB"/>
</dbReference>
<dbReference type="GO" id="GO:0015979">
    <property type="term" value="P:photosynthesis"/>
    <property type="evidence" value="ECO:0007669"/>
    <property type="project" value="UniProtKB-KW"/>
</dbReference>
<dbReference type="GO" id="GO:0033521">
    <property type="term" value="P:phytyl diphosphate biosynthetic process"/>
    <property type="evidence" value="ECO:0000315"/>
    <property type="project" value="UniProtKB"/>
</dbReference>
<dbReference type="GO" id="GO:0010189">
    <property type="term" value="P:vitamin E biosynthetic process"/>
    <property type="evidence" value="ECO:0000315"/>
    <property type="project" value="UniProtKB"/>
</dbReference>
<dbReference type="FunFam" id="3.50.50.60:FF:000083">
    <property type="entry name" value="Geranylgeranyl diphosphate reductase"/>
    <property type="match status" value="1"/>
</dbReference>
<dbReference type="Gene3D" id="3.50.50.60">
    <property type="entry name" value="FAD/NAD(P)-binding domain"/>
    <property type="match status" value="1"/>
</dbReference>
<dbReference type="InterPro" id="IPR010253">
    <property type="entry name" value="BchP_ChlP_pln/prok"/>
</dbReference>
<dbReference type="InterPro" id="IPR002938">
    <property type="entry name" value="FAD-bd"/>
</dbReference>
<dbReference type="InterPro" id="IPR036188">
    <property type="entry name" value="FAD/NAD-bd_sf"/>
</dbReference>
<dbReference type="InterPro" id="IPR011777">
    <property type="entry name" value="Geranylgeranyl_Rdtase_fam"/>
</dbReference>
<dbReference type="InterPro" id="IPR011774">
    <property type="entry name" value="Geranylgeranyl_Rdtase_pln/cyn"/>
</dbReference>
<dbReference type="InterPro" id="IPR050407">
    <property type="entry name" value="Geranylgeranyl_reductase"/>
</dbReference>
<dbReference type="NCBIfam" id="TIGR02023">
    <property type="entry name" value="BchP-ChlP"/>
    <property type="match status" value="1"/>
</dbReference>
<dbReference type="NCBIfam" id="TIGR02028">
    <property type="entry name" value="ChlP"/>
    <property type="match status" value="1"/>
</dbReference>
<dbReference type="NCBIfam" id="TIGR02032">
    <property type="entry name" value="GG-red-SF"/>
    <property type="match status" value="1"/>
</dbReference>
<dbReference type="PANTHER" id="PTHR42685">
    <property type="entry name" value="GERANYLGERANYL DIPHOSPHATE REDUCTASE"/>
    <property type="match status" value="1"/>
</dbReference>
<dbReference type="PANTHER" id="PTHR42685:SF4">
    <property type="entry name" value="GERANYLGERANYL DIPHOSPHATE REDUCTASE, CHLOROPLASTIC"/>
    <property type="match status" value="1"/>
</dbReference>
<dbReference type="Pfam" id="PF01494">
    <property type="entry name" value="FAD_binding_3"/>
    <property type="match status" value="1"/>
</dbReference>
<dbReference type="PRINTS" id="PR00420">
    <property type="entry name" value="RNGMNOXGNASE"/>
</dbReference>
<dbReference type="SUPFAM" id="SSF51905">
    <property type="entry name" value="FAD/NAD(P)-binding domain"/>
    <property type="match status" value="1"/>
</dbReference>
<comment type="function">
    <text evidence="2">Catalyzes the reduction of geranylgeranyl diphosphate to phytyl diphosphate, providing phytol for both tocopherol and chlorophyll synthesis.</text>
</comment>
<comment type="catalytic activity">
    <reaction>
        <text>phytyl diphosphate + 3 NADP(+) = geranylgeranyl diphosphate + 3 NADPH + 3 H(+)</text>
        <dbReference type="Rhea" id="RHEA:26229"/>
        <dbReference type="ChEBI" id="CHEBI:15378"/>
        <dbReference type="ChEBI" id="CHEBI:57533"/>
        <dbReference type="ChEBI" id="CHEBI:57783"/>
        <dbReference type="ChEBI" id="CHEBI:58349"/>
        <dbReference type="ChEBI" id="CHEBI:75434"/>
        <dbReference type="EC" id="1.3.1.83"/>
    </reaction>
</comment>
<comment type="pathway">
    <text>Porphyrin-containing compound metabolism; chlorophyll biosynthesis.</text>
</comment>
<comment type="pathway">
    <text>Cofactor biosynthesis; tocopherol biosynthesis.</text>
</comment>
<comment type="subcellular location">
    <subcellularLocation>
        <location evidence="3">Plastid</location>
        <location evidence="3">Chloroplast</location>
    </subcellularLocation>
</comment>
<comment type="developmental stage">
    <text evidence="2">Constant levels during the development of leaves.</text>
</comment>
<comment type="similarity">
    <text evidence="3">Belongs to the geranylgeranyl reductase family. ChlP subfamily.</text>
</comment>
<name>CHLP_TOBAC</name>
<feature type="transit peptide" description="Chloroplast" evidence="1">
    <location>
        <begin position="1"/>
        <end position="54"/>
    </location>
</feature>
<feature type="chain" id="PRO_0000386544" description="Geranylgeranyl diphosphate reductase, chloroplastic">
    <location>
        <begin position="55"/>
        <end position="464"/>
    </location>
</feature>